<proteinExistence type="inferred from homology"/>
<accession>Q9ZHE8</accession>
<organism>
    <name type="scientific">Buchnera aphidicola subsp. Schizaphis graminum (strain Sg)</name>
    <dbReference type="NCBI Taxonomy" id="198804"/>
    <lineage>
        <taxon>Bacteria</taxon>
        <taxon>Pseudomonadati</taxon>
        <taxon>Pseudomonadota</taxon>
        <taxon>Gammaproteobacteria</taxon>
        <taxon>Enterobacterales</taxon>
        <taxon>Erwiniaceae</taxon>
        <taxon>Buchnera</taxon>
    </lineage>
</organism>
<comment type="function">
    <text evidence="1">Acts as a ribosome collision sensor. Detects stalled/collided disomes (pairs of ribosomes where the leading ribosome is stalled and a second ribosome has collided with it) and endonucleolytically cleaves mRNA at the 5' boundary of the stalled ribosome. Stalled/collided disomes form a new interface (primarily via the 30S subunits) that binds SmrB. Cleaved mRNA becomes available for tmRNA ligation, leading to ribosomal subunit dissociation and rescue of stalled ribosomes.</text>
</comment>
<comment type="subunit">
    <text evidence="1">Associates with collided ribosomes, but not with correctly translating polysomes.</text>
</comment>
<comment type="similarity">
    <text evidence="1">Belongs to the SmrB family.</text>
</comment>
<dbReference type="EC" id="3.1.-.-" evidence="1"/>
<dbReference type="EMBL" id="AF067228">
    <property type="protein sequence ID" value="AAC97353.1"/>
    <property type="molecule type" value="Genomic_DNA"/>
</dbReference>
<dbReference type="EMBL" id="AE013218">
    <property type="protein sequence ID" value="AAM67661.1"/>
    <property type="molecule type" value="Genomic_DNA"/>
</dbReference>
<dbReference type="RefSeq" id="WP_011053627.1">
    <property type="nucleotide sequence ID" value="NC_004061.1"/>
</dbReference>
<dbReference type="SMR" id="Q9ZHE8"/>
<dbReference type="STRING" id="198804.BUsg_091"/>
<dbReference type="GeneID" id="93003560"/>
<dbReference type="KEGG" id="bas:BUsg_091"/>
<dbReference type="eggNOG" id="COG2840">
    <property type="taxonomic scope" value="Bacteria"/>
</dbReference>
<dbReference type="HOGENOM" id="CLU_055978_4_0_6"/>
<dbReference type="Proteomes" id="UP000000416">
    <property type="component" value="Chromosome"/>
</dbReference>
<dbReference type="GO" id="GO:0004521">
    <property type="term" value="F:RNA endonuclease activity"/>
    <property type="evidence" value="ECO:0007669"/>
    <property type="project" value="UniProtKB-UniRule"/>
</dbReference>
<dbReference type="GO" id="GO:0019843">
    <property type="term" value="F:rRNA binding"/>
    <property type="evidence" value="ECO:0007669"/>
    <property type="project" value="UniProtKB-UniRule"/>
</dbReference>
<dbReference type="GO" id="GO:0072344">
    <property type="term" value="P:rescue of stalled ribosome"/>
    <property type="evidence" value="ECO:0007669"/>
    <property type="project" value="UniProtKB-UniRule"/>
</dbReference>
<dbReference type="Gene3D" id="3.30.1370.110">
    <property type="match status" value="1"/>
</dbReference>
<dbReference type="HAMAP" id="MF_01042">
    <property type="entry name" value="SmrB"/>
    <property type="match status" value="1"/>
</dbReference>
<dbReference type="InterPro" id="IPR002625">
    <property type="entry name" value="Smr_dom"/>
</dbReference>
<dbReference type="InterPro" id="IPR036063">
    <property type="entry name" value="Smr_dom_sf"/>
</dbReference>
<dbReference type="InterPro" id="IPR022990">
    <property type="entry name" value="SmrB-like"/>
</dbReference>
<dbReference type="NCBIfam" id="NF003432">
    <property type="entry name" value="PRK04946.1"/>
    <property type="match status" value="1"/>
</dbReference>
<dbReference type="PANTHER" id="PTHR35562">
    <property type="entry name" value="DNA ENDONUCLEASE SMRA-RELATED"/>
    <property type="match status" value="1"/>
</dbReference>
<dbReference type="PANTHER" id="PTHR35562:SF1">
    <property type="entry name" value="UPF0115 PROTEIN YFCN"/>
    <property type="match status" value="1"/>
</dbReference>
<dbReference type="Pfam" id="PF01713">
    <property type="entry name" value="Smr"/>
    <property type="match status" value="1"/>
</dbReference>
<dbReference type="SMART" id="SM00463">
    <property type="entry name" value="SMR"/>
    <property type="match status" value="1"/>
</dbReference>
<dbReference type="SUPFAM" id="SSF160443">
    <property type="entry name" value="SMR domain-like"/>
    <property type="match status" value="1"/>
</dbReference>
<dbReference type="PROSITE" id="PS50828">
    <property type="entry name" value="SMR"/>
    <property type="match status" value="1"/>
</dbReference>
<gene>
    <name evidence="1" type="primary">smrB</name>
    <name type="ordered locus">BUsg_091</name>
</gene>
<feature type="chain" id="PRO_0000214549" description="Ribosome rescue factor SmrB">
    <location>
        <begin position="1"/>
        <end position="176"/>
    </location>
</feature>
<feature type="domain" description="Smr" evidence="1">
    <location>
        <begin position="98"/>
        <end position="173"/>
    </location>
</feature>
<feature type="sequence conflict" description="In Ref. 1; AAC97353." evidence="2" ref="1">
    <original>DLH</original>
    <variation>EFYI</variation>
    <location>
        <begin position="99"/>
        <end position="101"/>
    </location>
</feature>
<evidence type="ECO:0000255" key="1">
    <source>
        <dbReference type="HAMAP-Rule" id="MF_01042"/>
    </source>
</evidence>
<evidence type="ECO:0000305" key="2"/>
<sequence>MNKNRQLAVNSNILFRKWLNGTREMVQDTIFHSRLHKVNQKIRSKRMFFEQDVHSNYFSFYKKKDFFKENPVSYVRNKDFTNVLKKLKKGKYYPDIFLDLHGLNQYQARKKLGQLIAICQKEKMFCAHIMHGYGKNILKKQIPFWLSQHPDIVAFHQAPKMFGNDAAIMVIIEIHS</sequence>
<protein>
    <recommendedName>
        <fullName evidence="1">Ribosome rescue factor SmrB</fullName>
        <ecNumber evidence="1">3.1.-.-</ecNumber>
    </recommendedName>
</protein>
<keyword id="KW-0255">Endonuclease</keyword>
<keyword id="KW-0378">Hydrolase</keyword>
<keyword id="KW-0540">Nuclease</keyword>
<keyword id="KW-0694">RNA-binding</keyword>
<keyword id="KW-0699">rRNA-binding</keyword>
<reference key="1">
    <citation type="journal article" date="1998" name="Curr. Microbiol.">
        <title>Buchnera aphidicola (Aphid endosymbiont) contains genes encoding enzymes of histidine biosynthesis.</title>
        <authorList>
            <person name="Clark M.A."/>
            <person name="Baumann L."/>
            <person name="Baumann P."/>
        </authorList>
    </citation>
    <scope>NUCLEOTIDE SEQUENCE [GENOMIC DNA]</scope>
</reference>
<reference key="2">
    <citation type="journal article" date="2002" name="Science">
        <title>50 million years of genomic stasis in endosymbiotic bacteria.</title>
        <authorList>
            <person name="Tamas I."/>
            <person name="Klasson L."/>
            <person name="Canbaeck B."/>
            <person name="Naeslund A.K."/>
            <person name="Eriksson A.-S."/>
            <person name="Wernegreen J.J."/>
            <person name="Sandstroem J.P."/>
            <person name="Moran N.A."/>
            <person name="Andersson S.G.E."/>
        </authorList>
    </citation>
    <scope>NUCLEOTIDE SEQUENCE [LARGE SCALE GENOMIC DNA]</scope>
    <source>
        <strain>Sg</strain>
    </source>
</reference>
<name>SMRB_BUCAP</name>